<name>Y2254_NITOC</name>
<proteinExistence type="inferred from homology"/>
<gene>
    <name type="ordered locus">Noc_2254</name>
</gene>
<evidence type="ECO:0000255" key="1">
    <source>
        <dbReference type="HAMAP-Rule" id="MF_00632"/>
    </source>
</evidence>
<comment type="function">
    <text evidence="1">Nucleotide-binding protein.</text>
</comment>
<comment type="similarity">
    <text evidence="1">Belongs to the YajQ family.</text>
</comment>
<sequence>MPTFDVVSEVDKHELQNAIDQVNREIGTRFDFRGTEAHIEKSEEELILVAESEFQLQQMRTILDTKLAKRGVDVDCLEAKEPEIIGKRARQSIQVRQGIDKDTARKIIKIIKESKLKVQAAIQGEQVRISGKKRDDLQQVIALLREADLDLPLQYINFRD</sequence>
<feature type="chain" id="PRO_0000261953" description="Nucleotide-binding protein Noc_2254">
    <location>
        <begin position="1"/>
        <end position="160"/>
    </location>
</feature>
<organism>
    <name type="scientific">Nitrosococcus oceani (strain ATCC 19707 / BCRC 17464 / JCM 30415 / NCIMB 11848 / C-107)</name>
    <dbReference type="NCBI Taxonomy" id="323261"/>
    <lineage>
        <taxon>Bacteria</taxon>
        <taxon>Pseudomonadati</taxon>
        <taxon>Pseudomonadota</taxon>
        <taxon>Gammaproteobacteria</taxon>
        <taxon>Chromatiales</taxon>
        <taxon>Chromatiaceae</taxon>
        <taxon>Nitrosococcus</taxon>
    </lineage>
</organism>
<keyword id="KW-0547">Nucleotide-binding</keyword>
<keyword id="KW-1185">Reference proteome</keyword>
<reference key="1">
    <citation type="journal article" date="2006" name="Appl. Environ. Microbiol.">
        <title>Complete genome sequence of the marine, chemolithoautotrophic, ammonia-oxidizing bacterium Nitrosococcus oceani ATCC 19707.</title>
        <authorList>
            <person name="Klotz M.G."/>
            <person name="Arp D.J."/>
            <person name="Chain P.S.G."/>
            <person name="El-Sheikh A.F."/>
            <person name="Hauser L.J."/>
            <person name="Hommes N.G."/>
            <person name="Larimer F.W."/>
            <person name="Malfatti S.A."/>
            <person name="Norton J.M."/>
            <person name="Poret-Peterson A.T."/>
            <person name="Vergez L.M."/>
            <person name="Ward B.B."/>
        </authorList>
    </citation>
    <scope>NUCLEOTIDE SEQUENCE [LARGE SCALE GENOMIC DNA]</scope>
    <source>
        <strain>ATCC 19707 / BCRC 17464 / JCM 30415 / NCIMB 11848 / C-107</strain>
    </source>
</reference>
<dbReference type="EMBL" id="CP000127">
    <property type="protein sequence ID" value="ABA58712.1"/>
    <property type="molecule type" value="Genomic_DNA"/>
</dbReference>
<dbReference type="RefSeq" id="WP_002809460.1">
    <property type="nucleotide sequence ID" value="NC_007484.1"/>
</dbReference>
<dbReference type="SMR" id="Q3J8Y4"/>
<dbReference type="FunCoup" id="Q3J8Y4">
    <property type="interactions" value="305"/>
</dbReference>
<dbReference type="STRING" id="323261.Noc_2254"/>
<dbReference type="KEGG" id="noc:Noc_2254"/>
<dbReference type="eggNOG" id="COG1666">
    <property type="taxonomic scope" value="Bacteria"/>
</dbReference>
<dbReference type="HOGENOM" id="CLU_099839_1_0_6"/>
<dbReference type="InParanoid" id="Q3J8Y4"/>
<dbReference type="Proteomes" id="UP000006838">
    <property type="component" value="Chromosome"/>
</dbReference>
<dbReference type="GO" id="GO:0005829">
    <property type="term" value="C:cytosol"/>
    <property type="evidence" value="ECO:0007669"/>
    <property type="project" value="TreeGrafter"/>
</dbReference>
<dbReference type="GO" id="GO:0000166">
    <property type="term" value="F:nucleotide binding"/>
    <property type="evidence" value="ECO:0007669"/>
    <property type="project" value="TreeGrafter"/>
</dbReference>
<dbReference type="CDD" id="cd11740">
    <property type="entry name" value="YajQ_like"/>
    <property type="match status" value="1"/>
</dbReference>
<dbReference type="Gene3D" id="3.30.70.860">
    <property type="match status" value="1"/>
</dbReference>
<dbReference type="Gene3D" id="3.30.70.990">
    <property type="entry name" value="YajQ-like, domain 2"/>
    <property type="match status" value="1"/>
</dbReference>
<dbReference type="HAMAP" id="MF_00632">
    <property type="entry name" value="YajQ"/>
    <property type="match status" value="1"/>
</dbReference>
<dbReference type="InterPro" id="IPR007551">
    <property type="entry name" value="DUF520"/>
</dbReference>
<dbReference type="InterPro" id="IPR035571">
    <property type="entry name" value="UPF0234-like_C"/>
</dbReference>
<dbReference type="InterPro" id="IPR035570">
    <property type="entry name" value="UPF0234_N"/>
</dbReference>
<dbReference type="InterPro" id="IPR036183">
    <property type="entry name" value="YajQ-like_sf"/>
</dbReference>
<dbReference type="NCBIfam" id="NF003819">
    <property type="entry name" value="PRK05412.1"/>
    <property type="match status" value="1"/>
</dbReference>
<dbReference type="PANTHER" id="PTHR30476">
    <property type="entry name" value="UPF0234 PROTEIN YAJQ"/>
    <property type="match status" value="1"/>
</dbReference>
<dbReference type="PANTHER" id="PTHR30476:SF0">
    <property type="entry name" value="UPF0234 PROTEIN YAJQ"/>
    <property type="match status" value="1"/>
</dbReference>
<dbReference type="Pfam" id="PF04461">
    <property type="entry name" value="DUF520"/>
    <property type="match status" value="1"/>
</dbReference>
<dbReference type="SUPFAM" id="SSF89963">
    <property type="entry name" value="YajQ-like"/>
    <property type="match status" value="2"/>
</dbReference>
<protein>
    <recommendedName>
        <fullName evidence="1">Nucleotide-binding protein Noc_2254</fullName>
    </recommendedName>
</protein>
<accession>Q3J8Y4</accession>